<keyword id="KW-0067">ATP-binding</keyword>
<keyword id="KW-0903">Direct protein sequencing</keyword>
<keyword id="KW-0289">Folate biosynthesis</keyword>
<keyword id="KW-0418">Kinase</keyword>
<keyword id="KW-0456">Lyase</keyword>
<keyword id="KW-0460">Magnesium</keyword>
<keyword id="KW-0479">Metal-binding</keyword>
<keyword id="KW-0511">Multifunctional enzyme</keyword>
<keyword id="KW-0547">Nucleotide-binding</keyword>
<keyword id="KW-0808">Transferase</keyword>
<organism>
    <name type="scientific">Pneumocystis carinii</name>
    <dbReference type="NCBI Taxonomy" id="4754"/>
    <lineage>
        <taxon>Eukaryota</taxon>
        <taxon>Fungi</taxon>
        <taxon>Dikarya</taxon>
        <taxon>Ascomycota</taxon>
        <taxon>Taphrinomycotina</taxon>
        <taxon>Pneumocystomycetes</taxon>
        <taxon>Pneumocystaceae</taxon>
        <taxon>Pneumocystis</taxon>
    </lineage>
</organism>
<sequence length="740" mass="83962">MIFKSLKIFPFYQIYGFRFLKGMIFKKKIHLSKLNKNHDLIHIHSLTLKSIVGKNSWAQRLLQPVVLTLSMGINASLSGNMDDLSYSIDYATVYKEVFKLVENSKFENLLDLSDKISKVVLGDKCKGNWVKVIAETPKGHLLAETGLQIIRRKDGIREIDDQFFIKNLSLYTIIGINPEERVNKQNIIIDLILFKSSINLECKDDFIINTYNIEKLLKEIVKHVEESTFKTIEALALSIARISCISHNIEKIIVKVKKSCALAFAESAGVEIVRSRSCFSSNNYIKSENSIDNEAVYISLGSNLGNRIKFILDAIEKMSIKGIKVLKTSMLYESKPMYFKDQPAFYNAVCKVQTSLHPEQLLFELQLIEKELGRVKVIDKGPRCIDLDIVFYGRKIINSESLIIPHPRVLERSFVLKPLLDISGDLVHPVTGLSIASYFEKIVDHDIKPVLPFLYKNKSIDFSFRSYKAPTYIMAILNLTPDSFFDGGIHSYDSVLIDVEKFINAGATIIDIGGQSTRPGSYIIPLEEEIFRVIPAIKYLQKTYPDILISIDTFRSEVAEQAVKAGASLVNDISGGRYDPKMFNTVARLKVPICIMHMRGNFLNMDNLTDYGTDIIEQITIELEKLLNSAEKSGIPRWNIILDPGLGFSKTLHQNIELLRRFNELKSKNCFNGLPWLLGPSRKRFTGFITGDNMPKDRIWGTVAAVVASISGGCDIIRVHDVYEMYKISKMSDAIWKEIY</sequence>
<proteinExistence type="evidence at protein level"/>
<feature type="chain" id="PRO_0000168242" description="Folic acid synthesis protein fol1">
    <location>
        <begin position="1"/>
        <end position="740"/>
    </location>
</feature>
<feature type="domain" description="Pterin-binding" evidence="3">
    <location>
        <begin position="471"/>
        <end position="730"/>
    </location>
</feature>
<feature type="region of interest" description="DHNA 1">
    <location>
        <begin position="39"/>
        <end position="160"/>
    </location>
</feature>
<feature type="region of interest" description="DHNA 2">
    <location>
        <begin position="161"/>
        <end position="280"/>
    </location>
</feature>
<feature type="region of interest" description="HPPK">
    <location>
        <begin position="291"/>
        <end position="449"/>
    </location>
</feature>
<feature type="region of interest" description="DHPS">
    <location>
        <begin position="473"/>
        <end position="740"/>
    </location>
</feature>
<feature type="binding site" evidence="2">
    <location>
        <position position="478"/>
    </location>
    <ligand>
        <name>Mg(2+)</name>
        <dbReference type="ChEBI" id="CHEBI:18420"/>
    </ligand>
</feature>
<feature type="binding site" evidence="1">
    <location>
        <position position="517"/>
    </location>
    <ligand>
        <name>(7,8-dihydropterin-6-yl)methyl diphosphate</name>
        <dbReference type="ChEBI" id="CHEBI:72950"/>
    </ligand>
</feature>
<feature type="binding site" evidence="1">
    <location>
        <position position="552"/>
    </location>
    <ligand>
        <name>(7,8-dihydropterin-6-yl)methyl diphosphate</name>
        <dbReference type="ChEBI" id="CHEBI:72950"/>
    </ligand>
</feature>
<feature type="binding site" evidence="1">
    <location>
        <position position="571"/>
    </location>
    <ligand>
        <name>(7,8-dihydropterin-6-yl)methyl diphosphate</name>
        <dbReference type="ChEBI" id="CHEBI:72950"/>
    </ligand>
</feature>
<feature type="binding site" evidence="1">
    <location>
        <position position="643"/>
    </location>
    <ligand>
        <name>(7,8-dihydropterin-6-yl)methyl diphosphate</name>
        <dbReference type="ChEBI" id="CHEBI:72950"/>
    </ligand>
</feature>
<feature type="binding site" evidence="1">
    <location>
        <position position="683"/>
    </location>
    <ligand>
        <name>(7,8-dihydropterin-6-yl)methyl diphosphate</name>
        <dbReference type="ChEBI" id="CHEBI:72950"/>
    </ligand>
</feature>
<feature type="binding site" evidence="1">
    <location>
        <begin position="718"/>
        <end position="720"/>
    </location>
    <ligand>
        <name>(7,8-dihydropterin-6-yl)methyl diphosphate</name>
        <dbReference type="ChEBI" id="CHEBI:72950"/>
    </ligand>
</feature>
<feature type="mutagenesis site" description="Abolishes DHNA activity." evidence="7">
    <original>D</original>
    <variation>E</variation>
    <location>
        <position position="39"/>
    </location>
</feature>
<feature type="mutagenesis site" description="Reduces DHNA activity 11-fold." evidence="7">
    <original>G</original>
    <variation>A</variation>
    <location>
        <position position="53"/>
    </location>
</feature>
<feature type="mutagenesis site" description="Reduces DHNA activity 16-fold." evidence="7">
    <original>Q</original>
    <variation>N</variation>
    <location>
        <position position="63"/>
    </location>
</feature>
<feature type="mutagenesis site" description="No effect." evidence="7">
    <original>D</original>
    <variation>E</variation>
    <location>
        <position position="161"/>
    </location>
</feature>
<feature type="mutagenesis site" description="Abolishes DHNA activity." evidence="7">
    <original>G</original>
    <variation>A</variation>
    <location>
        <position position="175"/>
    </location>
</feature>
<feature type="mutagenesis site" description="Reduces DHNA activity 24-fold." evidence="7">
    <original>Q</original>
    <variation>N</variation>
    <location>
        <position position="185"/>
    </location>
</feature>
<gene>
    <name type="primary">fol1</name>
    <name evidence="10" type="synonym">fas</name>
</gene>
<reference key="1">
    <citation type="journal article" date="1992" name="Gene">
        <title>The multifunctional folic acid synthesis fas gene of Pneumocystis carinii appears to encode dihydropteroate synthase and hydroxymethyldihydropterin pyrophosphokinase.</title>
        <authorList>
            <person name="Volpes F."/>
            <person name="Dyer M."/>
            <person name="Scaife J.G."/>
            <person name="Darby G."/>
            <person name="Stammers D.K."/>
            <person name="Delves C.J."/>
        </authorList>
    </citation>
    <scope>NUCLEOTIDE SEQUENCE [GENOMIC DNA]</scope>
</reference>
<reference key="2">
    <citation type="journal article" date="1993" name="Eur. J. Biochem.">
        <title>The multifunctional folic acid synthesis fas gene of Pneumocystis carinii encodes dihydroneopterin aldolase, hydroxymethyldihydropterin pyrophosphokinase and dihydropteroate synthase.</title>
        <authorList>
            <person name="Volpe F."/>
            <person name="Ballantine S.P."/>
            <person name="Delves C.J."/>
        </authorList>
    </citation>
    <scope>PROTEIN SEQUENCE OF 1-20</scope>
    <scope>FUNCTION</scope>
    <scope>CATALYTIC ACTIVITY</scope>
</reference>
<reference key="3">
    <citation type="journal article" date="1994" name="Protein Expr. Purif.">
        <title>The hydroxymethyldihydropterin pyrophosphokinase domain of the multifunctional folic acid synthesis Fas protein of Pneumocystis carinii expressed as an independent enzyme in Escherichia coli: refolding and characterization of the recombinant enzyme.</title>
        <authorList>
            <person name="Ballantine S.P."/>
            <person name="Volpe F."/>
            <person name="Delves C.J."/>
        </authorList>
    </citation>
    <scope>PROTEIN SEQUENCE OF 281-293</scope>
    <scope>BIOPHYSICOCHEMICAL PROPERTIES</scope>
    <scope>CATALYTIC ACTIVITY</scope>
</reference>
<reference key="4">
    <citation type="journal article" date="1995" name="Gene">
        <title>Two domains with amino-acid sequence similarity are required for dihydroneopterin aldolase function in the multifunctional folic acid synthesis Fas protein of Pneumocystis carinii.</title>
        <authorList>
            <person name="Volpe F."/>
            <person name="Ballantine S.P."/>
            <person name="Delves C.J."/>
        </authorList>
    </citation>
    <scope>CATALYTIC ACTIVITY</scope>
</reference>
<reference key="5">
    <citation type="journal article" date="1998" name="Biochemistry">
        <title>Single amino acid substitutions disrupt tetramer formation in the dihydroneopterin aldolase enzyme of Pneumocystis carinii.</title>
        <authorList>
            <person name="Thomas M.C."/>
            <person name="Ballantine S.P."/>
            <person name="Bethell S.S."/>
            <person name="Bains S."/>
            <person name="Kellam P."/>
            <person name="Delves C.J."/>
        </authorList>
    </citation>
    <scope>BIOPHYSICOCHEMICAL PROPERTIES</scope>
    <scope>MUTAGENESIS OF ASP-39; GLY-53; GLN-63; ASP-161; GLY-175 AND GLN-185</scope>
</reference>
<comment type="function">
    <text evidence="6">Catalyzes three sequential steps of tetrahydrofolate biosynthesis.</text>
</comment>
<comment type="catalytic activity">
    <reaction evidence="4 5 6">
        <text>7,8-dihydroneopterin = 6-hydroxymethyl-7,8-dihydropterin + glycolaldehyde</text>
        <dbReference type="Rhea" id="RHEA:10540"/>
        <dbReference type="ChEBI" id="CHEBI:17001"/>
        <dbReference type="ChEBI" id="CHEBI:17071"/>
        <dbReference type="ChEBI" id="CHEBI:44841"/>
        <dbReference type="EC" id="4.1.2.25"/>
    </reaction>
</comment>
<comment type="catalytic activity">
    <reaction evidence="4 5 6">
        <text>6-hydroxymethyl-7,8-dihydropterin + ATP = (7,8-dihydropterin-6-yl)methyl diphosphate + AMP + H(+)</text>
        <dbReference type="Rhea" id="RHEA:11412"/>
        <dbReference type="ChEBI" id="CHEBI:15378"/>
        <dbReference type="ChEBI" id="CHEBI:30616"/>
        <dbReference type="ChEBI" id="CHEBI:44841"/>
        <dbReference type="ChEBI" id="CHEBI:72950"/>
        <dbReference type="ChEBI" id="CHEBI:456215"/>
        <dbReference type="EC" id="2.7.6.3"/>
    </reaction>
</comment>
<comment type="catalytic activity">
    <reaction evidence="4 5 6">
        <text>(7,8-dihydropterin-6-yl)methyl diphosphate + 4-aminobenzoate = 7,8-dihydropteroate + diphosphate</text>
        <dbReference type="Rhea" id="RHEA:19949"/>
        <dbReference type="ChEBI" id="CHEBI:17836"/>
        <dbReference type="ChEBI" id="CHEBI:17839"/>
        <dbReference type="ChEBI" id="CHEBI:33019"/>
        <dbReference type="ChEBI" id="CHEBI:72950"/>
        <dbReference type="EC" id="2.5.1.15"/>
    </reaction>
</comment>
<comment type="cofactor">
    <cofactor evidence="1">
        <name>Mg(2+)</name>
        <dbReference type="ChEBI" id="CHEBI:18420"/>
    </cofactor>
</comment>
<comment type="biophysicochemical properties">
    <kinetics>
        <KM evidence="5 7">2.3 uM for 7,8-dihydroneopterin</KM>
        <KM evidence="5 7">3.6 uM for 6-hydroxymethyl-7,8-dihydropterin</KM>
        <Vmax evidence="5 7">36.0 nmol/min/mg enzyme for 7,8-dihydroneopterin</Vmax>
    </kinetics>
    <phDependence>
        <text evidence="5 7">Optimum pH is 8.</text>
    </phDependence>
</comment>
<comment type="pathway">
    <text>Cofactor biosynthesis; tetrahydrofolate biosynthesis; 2-amino-4-hydroxy-6-hydroxymethyl-7,8-dihydropteridine diphosphate from 7,8-dihydroneopterin triphosphate: step 3/4.</text>
</comment>
<comment type="pathway">
    <text>Cofactor biosynthesis; tetrahydrofolate biosynthesis; 2-amino-4-hydroxy-6-hydroxymethyl-7,8-dihydropteridine diphosphate from 7,8-dihydroneopterin triphosphate: step 4/4.</text>
</comment>
<comment type="pathway">
    <text>Cofactor biosynthesis; tetrahydrofolate biosynthesis; 7,8-dihydrofolate from 2-amino-4-hydroxy-6-hydroxymethyl-7,8-dihydropteridine diphosphate and 4-aminobenzoate: step 1/2.</text>
</comment>
<comment type="similarity">
    <text evidence="11">In the N-terminal section; belongs to the DHNA family.</text>
</comment>
<comment type="similarity">
    <text evidence="11">In the central section; belongs to the HPPK family.</text>
</comment>
<comment type="similarity">
    <text evidence="11">In the C-terminal section; belongs to the DHPS family.</text>
</comment>
<evidence type="ECO:0000250" key="1">
    <source>
        <dbReference type="UniProtKB" id="P0AC13"/>
    </source>
</evidence>
<evidence type="ECO:0000250" key="2">
    <source>
        <dbReference type="UniProtKB" id="P9WND1"/>
    </source>
</evidence>
<evidence type="ECO:0000255" key="3">
    <source>
        <dbReference type="PROSITE-ProRule" id="PRU00334"/>
    </source>
</evidence>
<evidence type="ECO:0000269" key="4">
    <source>
    </source>
</evidence>
<evidence type="ECO:0000269" key="5">
    <source>
    </source>
</evidence>
<evidence type="ECO:0000269" key="6">
    <source>
    </source>
</evidence>
<evidence type="ECO:0000269" key="7">
    <source>
    </source>
</evidence>
<evidence type="ECO:0000303" key="8">
    <source>
    </source>
</evidence>
<evidence type="ECO:0000303" key="9">
    <source>
    </source>
</evidence>
<evidence type="ECO:0000303" key="10">
    <source>
    </source>
</evidence>
<evidence type="ECO:0000305" key="11"/>
<accession>P29251</accession>
<protein>
    <recommendedName>
        <fullName>Folic acid synthesis protein fol1</fullName>
    </recommendedName>
    <domain>
        <recommendedName>
            <fullName evidence="10">Dihydroneopterin aldolase</fullName>
            <shortName evidence="8">DHNA</shortName>
            <ecNumber evidence="5 6">4.1.2.25</ecNumber>
        </recommendedName>
        <alternativeName>
            <fullName>7,8-dihydroneopterin aldolase</fullName>
        </alternativeName>
        <alternativeName>
            <fullName evidence="10">FasA</fullName>
        </alternativeName>
        <alternativeName>
            <fullName evidence="10">FasB</fullName>
        </alternativeName>
    </domain>
    <domain>
        <recommendedName>
            <fullName evidence="10">6-hydroxymethyl-7,8-dihydropterin pyrophosphokinase</fullName>
            <shortName>HPPK</shortName>
            <ecNumber evidence="5 6">2.7.6.3</ecNumber>
        </recommendedName>
        <alternativeName>
            <fullName>2-amino-4-hydroxy-6-hydroxymethyldihydropteridine pyrophosphokinase</fullName>
        </alternativeName>
        <alternativeName>
            <fullName>7,8-dihydro-6-hydroxymethylpterin-pyrophosphokinase</fullName>
            <shortName evidence="9">PPPK</shortName>
        </alternativeName>
        <alternativeName>
            <fullName evidence="10">Dihydropterin pyrophosphokinase</fullName>
        </alternativeName>
        <alternativeName>
            <fullName evidence="10">FasC</fullName>
        </alternativeName>
    </domain>
    <domain>
        <recommendedName>
            <fullName evidence="10">Dihydropteroate synthase</fullName>
            <shortName evidence="9">DHPS</shortName>
            <ecNumber evidence="6">2.5.1.15</ecNumber>
        </recommendedName>
        <alternativeName>
            <fullName>Dihydropteroate pyrophosphorylase</fullName>
        </alternativeName>
        <alternativeName>
            <fullName evidence="10">FasD</fullName>
        </alternativeName>
    </domain>
</protein>
<dbReference type="EC" id="4.1.2.25" evidence="5 6"/>
<dbReference type="EC" id="2.7.6.3" evidence="5 6"/>
<dbReference type="EC" id="2.5.1.15" evidence="6"/>
<dbReference type="EMBL" id="M86602">
    <property type="protein sequence ID" value="AAA33790.1"/>
    <property type="molecule type" value="Genomic_DNA"/>
</dbReference>
<dbReference type="PIR" id="S28666">
    <property type="entry name" value="S28666"/>
</dbReference>
<dbReference type="SMR" id="P29251"/>
<dbReference type="VEuPathDB" id="FungiDB:T552_03074"/>
<dbReference type="SABIO-RK" id="P29251"/>
<dbReference type="UniPathway" id="UPA00077">
    <property type="reaction ID" value="UER00154"/>
</dbReference>
<dbReference type="UniPathway" id="UPA00077">
    <property type="reaction ID" value="UER00155"/>
</dbReference>
<dbReference type="UniPathway" id="UPA00077">
    <property type="reaction ID" value="UER00156"/>
</dbReference>
<dbReference type="GO" id="GO:0005740">
    <property type="term" value="C:mitochondrial envelope"/>
    <property type="evidence" value="ECO:0007669"/>
    <property type="project" value="TreeGrafter"/>
</dbReference>
<dbReference type="GO" id="GO:0003848">
    <property type="term" value="F:2-amino-4-hydroxy-6-hydroxymethyldihydropteridine diphosphokinase activity"/>
    <property type="evidence" value="ECO:0007669"/>
    <property type="project" value="UniProtKB-EC"/>
</dbReference>
<dbReference type="GO" id="GO:0005524">
    <property type="term" value="F:ATP binding"/>
    <property type="evidence" value="ECO:0007669"/>
    <property type="project" value="UniProtKB-KW"/>
</dbReference>
<dbReference type="GO" id="GO:0004150">
    <property type="term" value="F:dihydroneopterin aldolase activity"/>
    <property type="evidence" value="ECO:0007669"/>
    <property type="project" value="UniProtKB-EC"/>
</dbReference>
<dbReference type="GO" id="GO:0004156">
    <property type="term" value="F:dihydropteroate synthase activity"/>
    <property type="evidence" value="ECO:0007669"/>
    <property type="project" value="UniProtKB-EC"/>
</dbReference>
<dbReference type="GO" id="GO:0016301">
    <property type="term" value="F:kinase activity"/>
    <property type="evidence" value="ECO:0007669"/>
    <property type="project" value="UniProtKB-KW"/>
</dbReference>
<dbReference type="GO" id="GO:0046872">
    <property type="term" value="F:metal ion binding"/>
    <property type="evidence" value="ECO:0007669"/>
    <property type="project" value="UniProtKB-KW"/>
</dbReference>
<dbReference type="GO" id="GO:0046656">
    <property type="term" value="P:folic acid biosynthetic process"/>
    <property type="evidence" value="ECO:0007669"/>
    <property type="project" value="UniProtKB-KW"/>
</dbReference>
<dbReference type="GO" id="GO:0046654">
    <property type="term" value="P:tetrahydrofolate biosynthetic process"/>
    <property type="evidence" value="ECO:0007669"/>
    <property type="project" value="UniProtKB-UniPathway"/>
</dbReference>
<dbReference type="CDD" id="cd00534">
    <property type="entry name" value="DHNA_DHNTPE"/>
    <property type="match status" value="2"/>
</dbReference>
<dbReference type="CDD" id="cd00739">
    <property type="entry name" value="DHPS"/>
    <property type="match status" value="1"/>
</dbReference>
<dbReference type="CDD" id="cd00483">
    <property type="entry name" value="HPPK"/>
    <property type="match status" value="1"/>
</dbReference>
<dbReference type="FunFam" id="3.20.20.20:FF:000006">
    <property type="entry name" value="Dihydropteroate synthase"/>
    <property type="match status" value="1"/>
</dbReference>
<dbReference type="Gene3D" id="3.30.1130.10">
    <property type="match status" value="2"/>
</dbReference>
<dbReference type="Gene3D" id="3.30.70.560">
    <property type="entry name" value="7,8-Dihydro-6-hydroxymethylpterin-pyrophosphokinase HPPK"/>
    <property type="match status" value="1"/>
</dbReference>
<dbReference type="Gene3D" id="3.20.20.20">
    <property type="entry name" value="Dihydropteroate synthase-like"/>
    <property type="match status" value="1"/>
</dbReference>
<dbReference type="InterPro" id="IPR045031">
    <property type="entry name" value="DHP_synth-like"/>
</dbReference>
<dbReference type="InterPro" id="IPR006390">
    <property type="entry name" value="DHP_synth_dom"/>
</dbReference>
<dbReference type="InterPro" id="IPR011005">
    <property type="entry name" value="Dihydropteroate_synth-like_sf"/>
</dbReference>
<dbReference type="InterPro" id="IPR006157">
    <property type="entry name" value="FolB_dom"/>
</dbReference>
<dbReference type="InterPro" id="IPR016261">
    <property type="entry name" value="Folic_acid_synth"/>
</dbReference>
<dbReference type="InterPro" id="IPR043133">
    <property type="entry name" value="GTP-CH-I_C/QueF"/>
</dbReference>
<dbReference type="InterPro" id="IPR000550">
    <property type="entry name" value="Hppk"/>
</dbReference>
<dbReference type="InterPro" id="IPR035907">
    <property type="entry name" value="Hppk_sf"/>
</dbReference>
<dbReference type="InterPro" id="IPR000489">
    <property type="entry name" value="Pterin-binding_dom"/>
</dbReference>
<dbReference type="NCBIfam" id="TIGR01496">
    <property type="entry name" value="DHPS"/>
    <property type="match status" value="1"/>
</dbReference>
<dbReference type="NCBIfam" id="TIGR00526">
    <property type="entry name" value="folB_dom"/>
    <property type="match status" value="2"/>
</dbReference>
<dbReference type="NCBIfam" id="TIGR01498">
    <property type="entry name" value="folK"/>
    <property type="match status" value="1"/>
</dbReference>
<dbReference type="PANTHER" id="PTHR20941">
    <property type="entry name" value="FOLATE SYNTHESIS PROTEINS"/>
    <property type="match status" value="1"/>
</dbReference>
<dbReference type="PANTHER" id="PTHR20941:SF1">
    <property type="entry name" value="FOLIC ACID SYNTHESIS PROTEIN FOL1"/>
    <property type="match status" value="1"/>
</dbReference>
<dbReference type="Pfam" id="PF02152">
    <property type="entry name" value="FolB"/>
    <property type="match status" value="2"/>
</dbReference>
<dbReference type="Pfam" id="PF01288">
    <property type="entry name" value="HPPK"/>
    <property type="match status" value="1"/>
</dbReference>
<dbReference type="Pfam" id="PF00809">
    <property type="entry name" value="Pterin_bind"/>
    <property type="match status" value="1"/>
</dbReference>
<dbReference type="PIRSF" id="PIRSF000741">
    <property type="entry name" value="Folic_acid_synth"/>
    <property type="match status" value="1"/>
</dbReference>
<dbReference type="SMART" id="SM00905">
    <property type="entry name" value="FolB"/>
    <property type="match status" value="2"/>
</dbReference>
<dbReference type="SUPFAM" id="SSF55083">
    <property type="entry name" value="6-hydroxymethyl-7,8-dihydropterin pyrophosphokinase, HPPK"/>
    <property type="match status" value="1"/>
</dbReference>
<dbReference type="SUPFAM" id="SSF51717">
    <property type="entry name" value="Dihydropteroate synthetase-like"/>
    <property type="match status" value="1"/>
</dbReference>
<dbReference type="SUPFAM" id="SSF55620">
    <property type="entry name" value="Tetrahydrobiopterin biosynthesis enzymes-like"/>
    <property type="match status" value="2"/>
</dbReference>
<dbReference type="PROSITE" id="PS00792">
    <property type="entry name" value="DHPS_1"/>
    <property type="match status" value="1"/>
</dbReference>
<dbReference type="PROSITE" id="PS00793">
    <property type="entry name" value="DHPS_2"/>
    <property type="match status" value="1"/>
</dbReference>
<dbReference type="PROSITE" id="PS00794">
    <property type="entry name" value="HPPK"/>
    <property type="match status" value="1"/>
</dbReference>
<dbReference type="PROSITE" id="PS50972">
    <property type="entry name" value="PTERIN_BINDING"/>
    <property type="match status" value="1"/>
</dbReference>
<name>FOL1_PNECA</name>